<reference key="1">
    <citation type="submission" date="2006-05" db="EMBL/GenBank/DDBJ databases">
        <authorList>
            <consortium name="Genoscope"/>
        </authorList>
    </citation>
    <scope>NUCLEOTIDE SEQUENCE [LARGE SCALE GENOMIC DNA]</scope>
    <source>
        <strain>RCC307</strain>
    </source>
</reference>
<keyword id="KW-0067">ATP-binding</keyword>
<keyword id="KW-0227">DNA damage</keyword>
<keyword id="KW-0234">DNA repair</keyword>
<keyword id="KW-0238">DNA-binding</keyword>
<keyword id="KW-0547">Nucleotide-binding</keyword>
<keyword id="KW-1185">Reference proteome</keyword>
<dbReference type="EMBL" id="CT978603">
    <property type="protein sequence ID" value="CAK26981.1"/>
    <property type="molecule type" value="Genomic_DNA"/>
</dbReference>
<dbReference type="SMR" id="A5GQ22"/>
<dbReference type="STRING" id="316278.SynRCC307_0078"/>
<dbReference type="KEGG" id="syr:SynRCC307_0078"/>
<dbReference type="eggNOG" id="COG0249">
    <property type="taxonomic scope" value="Bacteria"/>
</dbReference>
<dbReference type="HOGENOM" id="CLU_002472_3_1_3"/>
<dbReference type="OrthoDB" id="9802448at2"/>
<dbReference type="Proteomes" id="UP000001115">
    <property type="component" value="Chromosome"/>
</dbReference>
<dbReference type="GO" id="GO:0005829">
    <property type="term" value="C:cytosol"/>
    <property type="evidence" value="ECO:0007669"/>
    <property type="project" value="TreeGrafter"/>
</dbReference>
<dbReference type="GO" id="GO:0005524">
    <property type="term" value="F:ATP binding"/>
    <property type="evidence" value="ECO:0007669"/>
    <property type="project" value="UniProtKB-UniRule"/>
</dbReference>
<dbReference type="GO" id="GO:0140664">
    <property type="term" value="F:ATP-dependent DNA damage sensor activity"/>
    <property type="evidence" value="ECO:0007669"/>
    <property type="project" value="InterPro"/>
</dbReference>
<dbReference type="GO" id="GO:0003684">
    <property type="term" value="F:damaged DNA binding"/>
    <property type="evidence" value="ECO:0007669"/>
    <property type="project" value="UniProtKB-UniRule"/>
</dbReference>
<dbReference type="GO" id="GO:0030983">
    <property type="term" value="F:mismatched DNA binding"/>
    <property type="evidence" value="ECO:0007669"/>
    <property type="project" value="InterPro"/>
</dbReference>
<dbReference type="GO" id="GO:0006298">
    <property type="term" value="P:mismatch repair"/>
    <property type="evidence" value="ECO:0007669"/>
    <property type="project" value="UniProtKB-UniRule"/>
</dbReference>
<dbReference type="CDD" id="cd03284">
    <property type="entry name" value="ABC_MutS1"/>
    <property type="match status" value="1"/>
</dbReference>
<dbReference type="FunFam" id="3.40.50.300:FF:000870">
    <property type="entry name" value="MutS protein homolog 4"/>
    <property type="match status" value="1"/>
</dbReference>
<dbReference type="Gene3D" id="1.10.1420.10">
    <property type="match status" value="2"/>
</dbReference>
<dbReference type="Gene3D" id="3.40.1170.10">
    <property type="entry name" value="DNA repair protein MutS, domain I"/>
    <property type="match status" value="1"/>
</dbReference>
<dbReference type="Gene3D" id="3.30.420.110">
    <property type="entry name" value="MutS, connector domain"/>
    <property type="match status" value="1"/>
</dbReference>
<dbReference type="Gene3D" id="3.40.50.300">
    <property type="entry name" value="P-loop containing nucleotide triphosphate hydrolases"/>
    <property type="match status" value="1"/>
</dbReference>
<dbReference type="HAMAP" id="MF_00096">
    <property type="entry name" value="MutS"/>
    <property type="match status" value="1"/>
</dbReference>
<dbReference type="InterPro" id="IPR005748">
    <property type="entry name" value="DNA_mismatch_repair_MutS"/>
</dbReference>
<dbReference type="InterPro" id="IPR007695">
    <property type="entry name" value="DNA_mismatch_repair_MutS-lik_N"/>
</dbReference>
<dbReference type="InterPro" id="IPR017261">
    <property type="entry name" value="DNA_mismatch_repair_MutS/MSH"/>
</dbReference>
<dbReference type="InterPro" id="IPR000432">
    <property type="entry name" value="DNA_mismatch_repair_MutS_C"/>
</dbReference>
<dbReference type="InterPro" id="IPR007861">
    <property type="entry name" value="DNA_mismatch_repair_MutS_clamp"/>
</dbReference>
<dbReference type="InterPro" id="IPR007696">
    <property type="entry name" value="DNA_mismatch_repair_MutS_core"/>
</dbReference>
<dbReference type="InterPro" id="IPR016151">
    <property type="entry name" value="DNA_mismatch_repair_MutS_N"/>
</dbReference>
<dbReference type="InterPro" id="IPR036187">
    <property type="entry name" value="DNA_mismatch_repair_MutS_sf"/>
</dbReference>
<dbReference type="InterPro" id="IPR007860">
    <property type="entry name" value="DNA_mmatch_repair_MutS_con_dom"/>
</dbReference>
<dbReference type="InterPro" id="IPR045076">
    <property type="entry name" value="MutS"/>
</dbReference>
<dbReference type="InterPro" id="IPR036678">
    <property type="entry name" value="MutS_con_dom_sf"/>
</dbReference>
<dbReference type="InterPro" id="IPR027417">
    <property type="entry name" value="P-loop_NTPase"/>
</dbReference>
<dbReference type="NCBIfam" id="TIGR01070">
    <property type="entry name" value="mutS1"/>
    <property type="match status" value="1"/>
</dbReference>
<dbReference type="NCBIfam" id="NF003810">
    <property type="entry name" value="PRK05399.1"/>
    <property type="match status" value="1"/>
</dbReference>
<dbReference type="PANTHER" id="PTHR11361:SF34">
    <property type="entry name" value="DNA MISMATCH REPAIR PROTEIN MSH1, MITOCHONDRIAL"/>
    <property type="match status" value="1"/>
</dbReference>
<dbReference type="PANTHER" id="PTHR11361">
    <property type="entry name" value="DNA MISMATCH REPAIR PROTEIN MUTS FAMILY MEMBER"/>
    <property type="match status" value="1"/>
</dbReference>
<dbReference type="Pfam" id="PF01624">
    <property type="entry name" value="MutS_I"/>
    <property type="match status" value="1"/>
</dbReference>
<dbReference type="Pfam" id="PF05188">
    <property type="entry name" value="MutS_II"/>
    <property type="match status" value="1"/>
</dbReference>
<dbReference type="Pfam" id="PF05192">
    <property type="entry name" value="MutS_III"/>
    <property type="match status" value="1"/>
</dbReference>
<dbReference type="Pfam" id="PF05190">
    <property type="entry name" value="MutS_IV"/>
    <property type="match status" value="1"/>
</dbReference>
<dbReference type="Pfam" id="PF00488">
    <property type="entry name" value="MutS_V"/>
    <property type="match status" value="1"/>
</dbReference>
<dbReference type="PIRSF" id="PIRSF037677">
    <property type="entry name" value="DNA_mis_repair_Msh6"/>
    <property type="match status" value="1"/>
</dbReference>
<dbReference type="SMART" id="SM00534">
    <property type="entry name" value="MUTSac"/>
    <property type="match status" value="1"/>
</dbReference>
<dbReference type="SMART" id="SM00533">
    <property type="entry name" value="MUTSd"/>
    <property type="match status" value="1"/>
</dbReference>
<dbReference type="SUPFAM" id="SSF55271">
    <property type="entry name" value="DNA repair protein MutS, domain I"/>
    <property type="match status" value="1"/>
</dbReference>
<dbReference type="SUPFAM" id="SSF53150">
    <property type="entry name" value="DNA repair protein MutS, domain II"/>
    <property type="match status" value="1"/>
</dbReference>
<dbReference type="SUPFAM" id="SSF48334">
    <property type="entry name" value="DNA repair protein MutS, domain III"/>
    <property type="match status" value="1"/>
</dbReference>
<dbReference type="SUPFAM" id="SSF52540">
    <property type="entry name" value="P-loop containing nucleoside triphosphate hydrolases"/>
    <property type="match status" value="1"/>
</dbReference>
<dbReference type="PROSITE" id="PS00486">
    <property type="entry name" value="DNA_MISMATCH_REPAIR_2"/>
    <property type="match status" value="1"/>
</dbReference>
<comment type="function">
    <text evidence="1">This protein is involved in the repair of mismatches in DNA. It is possible that it carries out the mismatch recognition step. This protein has a weak ATPase activity.</text>
</comment>
<comment type="similarity">
    <text evidence="1">Belongs to the DNA mismatch repair MutS family.</text>
</comment>
<proteinExistence type="inferred from homology"/>
<evidence type="ECO:0000255" key="1">
    <source>
        <dbReference type="HAMAP-Rule" id="MF_00096"/>
    </source>
</evidence>
<evidence type="ECO:0000256" key="2">
    <source>
        <dbReference type="SAM" id="MobiDB-lite"/>
    </source>
</evidence>
<accession>A5GQ22</accession>
<organism>
    <name type="scientific">Synechococcus sp. (strain RCC307)</name>
    <dbReference type="NCBI Taxonomy" id="316278"/>
    <lineage>
        <taxon>Bacteria</taxon>
        <taxon>Bacillati</taxon>
        <taxon>Cyanobacteriota</taxon>
        <taxon>Cyanophyceae</taxon>
        <taxon>Synechococcales</taxon>
        <taxon>Synechococcaceae</taxon>
        <taxon>Synechococcus</taxon>
    </lineage>
</organism>
<feature type="chain" id="PRO_0000335234" description="DNA mismatch repair protein MutS">
    <location>
        <begin position="1"/>
        <end position="885"/>
    </location>
</feature>
<feature type="region of interest" description="Disordered" evidence="2">
    <location>
        <begin position="1"/>
        <end position="67"/>
    </location>
</feature>
<feature type="compositionally biased region" description="Basic and acidic residues" evidence="2">
    <location>
        <begin position="26"/>
        <end position="36"/>
    </location>
</feature>
<feature type="binding site" evidence="1">
    <location>
        <begin position="691"/>
        <end position="698"/>
    </location>
    <ligand>
        <name>ATP</name>
        <dbReference type="ChEBI" id="CHEBI:30616"/>
    </ligand>
</feature>
<name>MUTS_SYNR3</name>
<sequence length="885" mass="97051">MAPGEQQLSLVPDDTIQGSLFAPEPSEDKTEESERPKQRRSHPGRRTAPAAQHNEDSSNNDDEGLPRWHHHGLVDPLALTPMLRHYVELKAAHPERVLLYRLGDFFECFFEDALLTSRLLELTLTGKEGGKSIGRVPMAGIPHHAAERYCSELVRRGHAVALCDQLETTAAKGALLKRDITRVLTPGTVLEEGMLAARRNNWLAAVVLDDEQRWGLAVADVSTGELLLHERQGTTELQQQLLQLEAAELLLPGIEAAEWCPDGLGLTQQPRTPFEAASADRALKQRFGVRNLEGLGLADHPLARRAAGGLIAYLDASQPGSTVPLERPQLVFAGDALVLDHQTRRNLELTATQRDGQFQGSLLWAIDRSHTAMGGRALRRWLEAPLLDATAIRGRQEAITELVEQRPLRLSVRRLLRPMADLERLAGRCGAGRASARDLVALADGLERLPLLADLLKSSSAAPLADLQQPRPDLQQLAELLRFQLVDQPPMSLSEGGLIHDGVDEDLDDLRNRLDEQENWLAGVEKRERKASSNPNLRLQFHRSFGYFLAVSRAKATAVPDHWIRRQTLSNEERFVTPELKEREGRILQLKARSHQREYDLFCRLRDQVGEQATAIRDAARAVASLDALAGLAELAATQGYCRPELTDGRCLEIEGGRHPVVEQLLSESAFVPNSVALGHGDKPDLVVLTGPNASGKSCYLRQCGVLQLMAQMGSWIPAERAAIALADRIFTRVGAVDDLASGQSTFMVEMAETANILQHASERSLVLLDEIGRGTATFDGLSIAWAVAEHLASAPPHGLGARSIFATHYHELNALAGSHSNVANFQVVVEEQDAELVFLHKVMPGGADRSYGIEAARLAGVPPSVVQRARQMLERIEGGQPLAC</sequence>
<protein>
    <recommendedName>
        <fullName evidence="1">DNA mismatch repair protein MutS</fullName>
    </recommendedName>
</protein>
<gene>
    <name evidence="1" type="primary">mutS</name>
    <name type="ordered locus">SynRCC307_0078</name>
</gene>